<evidence type="ECO:0000255" key="1">
    <source>
        <dbReference type="HAMAP-Rule" id="MF_00036"/>
    </source>
</evidence>
<protein>
    <recommendedName>
        <fullName evidence="1">Alanine--tRNA ligase</fullName>
        <ecNumber evidence="1">6.1.1.7</ecNumber>
    </recommendedName>
    <alternativeName>
        <fullName evidence="1">Alanyl-tRNA synthetase</fullName>
        <shortName evidence="1">AlaRS</shortName>
    </alternativeName>
</protein>
<feature type="chain" id="PRO_0000347724" description="Alanine--tRNA ligase">
    <location>
        <begin position="1"/>
        <end position="890"/>
    </location>
</feature>
<feature type="binding site" evidence="1">
    <location>
        <position position="572"/>
    </location>
    <ligand>
        <name>Zn(2+)</name>
        <dbReference type="ChEBI" id="CHEBI:29105"/>
    </ligand>
</feature>
<feature type="binding site" evidence="1">
    <location>
        <position position="576"/>
    </location>
    <ligand>
        <name>Zn(2+)</name>
        <dbReference type="ChEBI" id="CHEBI:29105"/>
    </ligand>
</feature>
<feature type="binding site" evidence="1">
    <location>
        <position position="674"/>
    </location>
    <ligand>
        <name>Zn(2+)</name>
        <dbReference type="ChEBI" id="CHEBI:29105"/>
    </ligand>
</feature>
<feature type="binding site" evidence="1">
    <location>
        <position position="678"/>
    </location>
    <ligand>
        <name>Zn(2+)</name>
        <dbReference type="ChEBI" id="CHEBI:29105"/>
    </ligand>
</feature>
<organism>
    <name type="scientific">Prochlorococcus marinus (strain MIT 9211)</name>
    <dbReference type="NCBI Taxonomy" id="93059"/>
    <lineage>
        <taxon>Bacteria</taxon>
        <taxon>Bacillati</taxon>
        <taxon>Cyanobacteriota</taxon>
        <taxon>Cyanophyceae</taxon>
        <taxon>Synechococcales</taxon>
        <taxon>Prochlorococcaceae</taxon>
        <taxon>Prochlorococcus</taxon>
    </lineage>
</organism>
<sequence length="890" mass="98746">MTVEQLSPHSKSHPLTGEEIRTAFLHFFAERGHQVLPSASLVPDDPTVLLTIAGMLPFKPVFLGHEERPSSRVVTSQKCIRTNDIENVGRTARHQTYFEMLGNFSFGDYFKKEAIQWAWELSTKTFGLDPKYLVVSIFREDDDAYEIWRNIIGVNPDRIIRMDEADNFWSSGPTGPCGPCSELYYDFNPELGNHCIDLEDDTRFIEFYNLVFMEFNRDSTGRLSSLSNCNIDTGMGLERMAQILQKVPNNYETDLIYPLLEKVAYLVGVDYQKTDKKTRISYKVIGDHIRACVQLISDGVSASNLGRGYILRRLLRRIVRHGRLLGIPKPFLIDLGEVAISLMKSTYPQLLERRDVILKELQREELRFLETLERGERLLADLLSNNPKEISGEQAFELYDTYGFPLELTQEIAEENSIEVDLKAFEKAMQRQRIRAKAASTTIDLTLQDTLDKAVRELKPTNFKGYECLTETSTVQAIFINGELAQEAQENDVIQVALDITPFYGESGGQIGDTGILFKESVTNCLIEIDSVIRNNDVFVHRGIVKNGRLQVGDIIQSQVHHINRRRAQINHTATHLLQASLKEIVGSEISQAGSLVSFERLRFDFHCSSPVSSEELEKVEKKINLWISESHSLVVKEMKIDDAKQAGAVAMFGEKYGTLVRVVDVPGVSMELCGGTHVANTADIGAFKIVGESGIAAGIRRIEAVAGPGVFDYFNARDSVVRILSERFKVQSNEIVDRVIALQDEVKLLGKSLIKAQEEIAFAKTSALVSKATAIKSSHYIIHRLDGVPSEALQSAAKVLVDQLGDCSAVLLAGTPTQSDPNKVILVAAFGAKTVAHGLHAGKFLGPIAKMCGGGGGGRPNFAQAGGRDAKPLDKALDLAREQLMGALL</sequence>
<dbReference type="EC" id="6.1.1.7" evidence="1"/>
<dbReference type="EMBL" id="CP000878">
    <property type="protein sequence ID" value="ABX07982.1"/>
    <property type="molecule type" value="Genomic_DNA"/>
</dbReference>
<dbReference type="RefSeq" id="WP_012194607.1">
    <property type="nucleotide sequence ID" value="NC_009976.1"/>
</dbReference>
<dbReference type="SMR" id="A9B9E5"/>
<dbReference type="STRING" id="93059.P9211_00511"/>
<dbReference type="KEGG" id="pmj:P9211_00511"/>
<dbReference type="eggNOG" id="COG0013">
    <property type="taxonomic scope" value="Bacteria"/>
</dbReference>
<dbReference type="HOGENOM" id="CLU_004485_1_1_3"/>
<dbReference type="OrthoDB" id="9803884at2"/>
<dbReference type="Proteomes" id="UP000000788">
    <property type="component" value="Chromosome"/>
</dbReference>
<dbReference type="GO" id="GO:0005829">
    <property type="term" value="C:cytosol"/>
    <property type="evidence" value="ECO:0007669"/>
    <property type="project" value="TreeGrafter"/>
</dbReference>
<dbReference type="GO" id="GO:0004813">
    <property type="term" value="F:alanine-tRNA ligase activity"/>
    <property type="evidence" value="ECO:0007669"/>
    <property type="project" value="UniProtKB-UniRule"/>
</dbReference>
<dbReference type="GO" id="GO:0002161">
    <property type="term" value="F:aminoacyl-tRNA deacylase activity"/>
    <property type="evidence" value="ECO:0007669"/>
    <property type="project" value="TreeGrafter"/>
</dbReference>
<dbReference type="GO" id="GO:0005524">
    <property type="term" value="F:ATP binding"/>
    <property type="evidence" value="ECO:0007669"/>
    <property type="project" value="UniProtKB-UniRule"/>
</dbReference>
<dbReference type="GO" id="GO:0000049">
    <property type="term" value="F:tRNA binding"/>
    <property type="evidence" value="ECO:0007669"/>
    <property type="project" value="UniProtKB-KW"/>
</dbReference>
<dbReference type="GO" id="GO:0008270">
    <property type="term" value="F:zinc ion binding"/>
    <property type="evidence" value="ECO:0007669"/>
    <property type="project" value="UniProtKB-UniRule"/>
</dbReference>
<dbReference type="GO" id="GO:0006419">
    <property type="term" value="P:alanyl-tRNA aminoacylation"/>
    <property type="evidence" value="ECO:0007669"/>
    <property type="project" value="UniProtKB-UniRule"/>
</dbReference>
<dbReference type="CDD" id="cd00673">
    <property type="entry name" value="AlaRS_core"/>
    <property type="match status" value="1"/>
</dbReference>
<dbReference type="FunFam" id="3.10.310.40:FF:000001">
    <property type="entry name" value="Alanine--tRNA ligase"/>
    <property type="match status" value="1"/>
</dbReference>
<dbReference type="FunFam" id="3.30.54.20:FF:000001">
    <property type="entry name" value="Alanine--tRNA ligase"/>
    <property type="match status" value="1"/>
</dbReference>
<dbReference type="FunFam" id="3.30.930.10:FF:000004">
    <property type="entry name" value="Alanine--tRNA ligase"/>
    <property type="match status" value="1"/>
</dbReference>
<dbReference type="FunFam" id="3.30.980.10:FF:000004">
    <property type="entry name" value="Alanine--tRNA ligase, cytoplasmic"/>
    <property type="match status" value="1"/>
</dbReference>
<dbReference type="Gene3D" id="2.40.30.130">
    <property type="match status" value="1"/>
</dbReference>
<dbReference type="Gene3D" id="3.10.310.40">
    <property type="match status" value="1"/>
</dbReference>
<dbReference type="Gene3D" id="3.30.54.20">
    <property type="match status" value="1"/>
</dbReference>
<dbReference type="Gene3D" id="3.30.930.10">
    <property type="entry name" value="Bira Bifunctional Protein, Domain 2"/>
    <property type="match status" value="1"/>
</dbReference>
<dbReference type="Gene3D" id="3.30.980.10">
    <property type="entry name" value="Threonyl-trna Synthetase, Chain A, domain 2"/>
    <property type="match status" value="1"/>
</dbReference>
<dbReference type="HAMAP" id="MF_00036_B">
    <property type="entry name" value="Ala_tRNA_synth_B"/>
    <property type="match status" value="1"/>
</dbReference>
<dbReference type="InterPro" id="IPR045864">
    <property type="entry name" value="aa-tRNA-synth_II/BPL/LPL"/>
</dbReference>
<dbReference type="InterPro" id="IPR002318">
    <property type="entry name" value="Ala-tRNA-lgiase_IIc"/>
</dbReference>
<dbReference type="InterPro" id="IPR018162">
    <property type="entry name" value="Ala-tRNA-ligase_IIc_anticod-bd"/>
</dbReference>
<dbReference type="InterPro" id="IPR018165">
    <property type="entry name" value="Ala-tRNA-synth_IIc_core"/>
</dbReference>
<dbReference type="InterPro" id="IPR018164">
    <property type="entry name" value="Ala-tRNA-synth_IIc_N"/>
</dbReference>
<dbReference type="InterPro" id="IPR050058">
    <property type="entry name" value="Ala-tRNA_ligase"/>
</dbReference>
<dbReference type="InterPro" id="IPR023033">
    <property type="entry name" value="Ala_tRNA_ligase_euk/bac"/>
</dbReference>
<dbReference type="InterPro" id="IPR003156">
    <property type="entry name" value="DHHA1_dom"/>
</dbReference>
<dbReference type="InterPro" id="IPR018163">
    <property type="entry name" value="Thr/Ala-tRNA-synth_IIc_edit"/>
</dbReference>
<dbReference type="InterPro" id="IPR009000">
    <property type="entry name" value="Transl_B-barrel_sf"/>
</dbReference>
<dbReference type="InterPro" id="IPR012947">
    <property type="entry name" value="tRNA_SAD"/>
</dbReference>
<dbReference type="NCBIfam" id="TIGR00344">
    <property type="entry name" value="alaS"/>
    <property type="match status" value="1"/>
</dbReference>
<dbReference type="PANTHER" id="PTHR11777:SF9">
    <property type="entry name" value="ALANINE--TRNA LIGASE, CYTOPLASMIC"/>
    <property type="match status" value="1"/>
</dbReference>
<dbReference type="PANTHER" id="PTHR11777">
    <property type="entry name" value="ALANYL-TRNA SYNTHETASE"/>
    <property type="match status" value="1"/>
</dbReference>
<dbReference type="Pfam" id="PF02272">
    <property type="entry name" value="DHHA1"/>
    <property type="match status" value="1"/>
</dbReference>
<dbReference type="Pfam" id="PF01411">
    <property type="entry name" value="tRNA-synt_2c"/>
    <property type="match status" value="1"/>
</dbReference>
<dbReference type="Pfam" id="PF07973">
    <property type="entry name" value="tRNA_SAD"/>
    <property type="match status" value="1"/>
</dbReference>
<dbReference type="PRINTS" id="PR00980">
    <property type="entry name" value="TRNASYNTHALA"/>
</dbReference>
<dbReference type="SMART" id="SM00863">
    <property type="entry name" value="tRNA_SAD"/>
    <property type="match status" value="1"/>
</dbReference>
<dbReference type="SUPFAM" id="SSF55681">
    <property type="entry name" value="Class II aaRS and biotin synthetases"/>
    <property type="match status" value="1"/>
</dbReference>
<dbReference type="SUPFAM" id="SSF101353">
    <property type="entry name" value="Putative anticodon-binding domain of alanyl-tRNA synthetase (AlaRS)"/>
    <property type="match status" value="1"/>
</dbReference>
<dbReference type="SUPFAM" id="SSF55186">
    <property type="entry name" value="ThrRS/AlaRS common domain"/>
    <property type="match status" value="1"/>
</dbReference>
<dbReference type="SUPFAM" id="SSF50447">
    <property type="entry name" value="Translation proteins"/>
    <property type="match status" value="1"/>
</dbReference>
<dbReference type="PROSITE" id="PS50860">
    <property type="entry name" value="AA_TRNA_LIGASE_II_ALA"/>
    <property type="match status" value="1"/>
</dbReference>
<reference key="1">
    <citation type="journal article" date="2007" name="PLoS Genet.">
        <title>Patterns and implications of gene gain and loss in the evolution of Prochlorococcus.</title>
        <authorList>
            <person name="Kettler G.C."/>
            <person name="Martiny A.C."/>
            <person name="Huang K."/>
            <person name="Zucker J."/>
            <person name="Coleman M.L."/>
            <person name="Rodrigue S."/>
            <person name="Chen F."/>
            <person name="Lapidus A."/>
            <person name="Ferriera S."/>
            <person name="Johnson J."/>
            <person name="Steglich C."/>
            <person name="Church G.M."/>
            <person name="Richardson P."/>
            <person name="Chisholm S.W."/>
        </authorList>
    </citation>
    <scope>NUCLEOTIDE SEQUENCE [LARGE SCALE GENOMIC DNA]</scope>
    <source>
        <strain>MIT 9211</strain>
    </source>
</reference>
<proteinExistence type="inferred from homology"/>
<comment type="function">
    <text evidence="1">Catalyzes the attachment of alanine to tRNA(Ala) in a two-step reaction: alanine is first activated by ATP to form Ala-AMP and then transferred to the acceptor end of tRNA(Ala). Also edits incorrectly charged Ser-tRNA(Ala) and Gly-tRNA(Ala) via its editing domain.</text>
</comment>
<comment type="catalytic activity">
    <reaction evidence="1">
        <text>tRNA(Ala) + L-alanine + ATP = L-alanyl-tRNA(Ala) + AMP + diphosphate</text>
        <dbReference type="Rhea" id="RHEA:12540"/>
        <dbReference type="Rhea" id="RHEA-COMP:9657"/>
        <dbReference type="Rhea" id="RHEA-COMP:9923"/>
        <dbReference type="ChEBI" id="CHEBI:30616"/>
        <dbReference type="ChEBI" id="CHEBI:33019"/>
        <dbReference type="ChEBI" id="CHEBI:57972"/>
        <dbReference type="ChEBI" id="CHEBI:78442"/>
        <dbReference type="ChEBI" id="CHEBI:78497"/>
        <dbReference type="ChEBI" id="CHEBI:456215"/>
        <dbReference type="EC" id="6.1.1.7"/>
    </reaction>
</comment>
<comment type="cofactor">
    <cofactor evidence="1">
        <name>Zn(2+)</name>
        <dbReference type="ChEBI" id="CHEBI:29105"/>
    </cofactor>
    <text evidence="1">Binds 1 zinc ion per subunit.</text>
</comment>
<comment type="subcellular location">
    <subcellularLocation>
        <location evidence="1">Cytoplasm</location>
    </subcellularLocation>
</comment>
<comment type="domain">
    <text evidence="1">Consists of three domains; the N-terminal catalytic domain, the editing domain and the C-terminal C-Ala domain. The editing domain removes incorrectly charged amino acids, while the C-Ala domain, along with tRNA(Ala), serves as a bridge to cooperatively bring together the editing and aminoacylation centers thus stimulating deacylation of misacylated tRNAs.</text>
</comment>
<comment type="similarity">
    <text evidence="1">Belongs to the class-II aminoacyl-tRNA synthetase family.</text>
</comment>
<keyword id="KW-0030">Aminoacyl-tRNA synthetase</keyword>
<keyword id="KW-0067">ATP-binding</keyword>
<keyword id="KW-0963">Cytoplasm</keyword>
<keyword id="KW-0436">Ligase</keyword>
<keyword id="KW-0479">Metal-binding</keyword>
<keyword id="KW-0547">Nucleotide-binding</keyword>
<keyword id="KW-0648">Protein biosynthesis</keyword>
<keyword id="KW-1185">Reference proteome</keyword>
<keyword id="KW-0694">RNA-binding</keyword>
<keyword id="KW-0820">tRNA-binding</keyword>
<keyword id="KW-0862">Zinc</keyword>
<accession>A9B9E5</accession>
<name>SYA_PROM4</name>
<gene>
    <name evidence="1" type="primary">alaS</name>
    <name type="ordered locus">P9211_00511</name>
</gene>